<protein>
    <recommendedName>
        <fullName evidence="1">1-deoxy-D-xylulose-5-phosphate synthase</fullName>
        <ecNumber evidence="1">2.2.1.7</ecNumber>
    </recommendedName>
    <alternativeName>
        <fullName evidence="1">1-deoxyxylulose-5-phosphate synthase</fullName>
        <shortName evidence="1">DXP synthase</shortName>
        <shortName evidence="1">DXPS</shortName>
    </alternativeName>
</protein>
<organism>
    <name type="scientific">Nitratidesulfovibrio vulgaris (strain ATCC 29579 / DSM 644 / CCUG 34227 / NCIMB 8303 / VKM B-1760 / Hildenborough)</name>
    <name type="common">Desulfovibrio vulgaris</name>
    <dbReference type="NCBI Taxonomy" id="882"/>
    <lineage>
        <taxon>Bacteria</taxon>
        <taxon>Pseudomonadati</taxon>
        <taxon>Thermodesulfobacteriota</taxon>
        <taxon>Desulfovibrionia</taxon>
        <taxon>Desulfovibrionales</taxon>
        <taxon>Desulfovibrionaceae</taxon>
        <taxon>Nitratidesulfovibrio</taxon>
    </lineage>
</organism>
<feature type="chain" id="PRO_0000256414" description="1-deoxy-D-xylulose-5-phosphate synthase">
    <location>
        <begin position="1"/>
        <end position="641"/>
    </location>
</feature>
<feature type="binding site" evidence="1">
    <location>
        <position position="79"/>
    </location>
    <ligand>
        <name>thiamine diphosphate</name>
        <dbReference type="ChEBI" id="CHEBI:58937"/>
    </ligand>
</feature>
<feature type="binding site" evidence="1">
    <location>
        <begin position="120"/>
        <end position="122"/>
    </location>
    <ligand>
        <name>thiamine diphosphate</name>
        <dbReference type="ChEBI" id="CHEBI:58937"/>
    </ligand>
</feature>
<feature type="binding site" evidence="1">
    <location>
        <position position="151"/>
    </location>
    <ligand>
        <name>Mg(2+)</name>
        <dbReference type="ChEBI" id="CHEBI:18420"/>
    </ligand>
</feature>
<feature type="binding site" evidence="1">
    <location>
        <begin position="152"/>
        <end position="153"/>
    </location>
    <ligand>
        <name>thiamine diphosphate</name>
        <dbReference type="ChEBI" id="CHEBI:58937"/>
    </ligand>
</feature>
<feature type="binding site" evidence="1">
    <location>
        <position position="180"/>
    </location>
    <ligand>
        <name>Mg(2+)</name>
        <dbReference type="ChEBI" id="CHEBI:18420"/>
    </ligand>
</feature>
<feature type="binding site" evidence="1">
    <location>
        <position position="180"/>
    </location>
    <ligand>
        <name>thiamine diphosphate</name>
        <dbReference type="ChEBI" id="CHEBI:58937"/>
    </ligand>
</feature>
<feature type="binding site" evidence="1">
    <location>
        <position position="291"/>
    </location>
    <ligand>
        <name>thiamine diphosphate</name>
        <dbReference type="ChEBI" id="CHEBI:58937"/>
    </ligand>
</feature>
<feature type="binding site" evidence="1">
    <location>
        <position position="375"/>
    </location>
    <ligand>
        <name>thiamine diphosphate</name>
        <dbReference type="ChEBI" id="CHEBI:58937"/>
    </ligand>
</feature>
<dbReference type="EC" id="2.2.1.7" evidence="1"/>
<dbReference type="EMBL" id="AE017285">
    <property type="protein sequence ID" value="AAS95828.1"/>
    <property type="molecule type" value="Genomic_DNA"/>
</dbReference>
<dbReference type="RefSeq" id="WP_010938645.1">
    <property type="nucleotide sequence ID" value="NC_002937.3"/>
</dbReference>
<dbReference type="RefSeq" id="YP_010569.1">
    <property type="nucleotide sequence ID" value="NC_002937.3"/>
</dbReference>
<dbReference type="SMR" id="Q72CD3"/>
<dbReference type="STRING" id="882.DVU_1350"/>
<dbReference type="PaxDb" id="882-DVU_1350"/>
<dbReference type="EnsemblBacteria" id="AAS95828">
    <property type="protein sequence ID" value="AAS95828"/>
    <property type="gene ID" value="DVU_1350"/>
</dbReference>
<dbReference type="KEGG" id="dvu:DVU_1350"/>
<dbReference type="PATRIC" id="fig|882.5.peg.1262"/>
<dbReference type="eggNOG" id="COG1154">
    <property type="taxonomic scope" value="Bacteria"/>
</dbReference>
<dbReference type="HOGENOM" id="CLU_009227_1_4_7"/>
<dbReference type="OrthoDB" id="9803371at2"/>
<dbReference type="PhylomeDB" id="Q72CD3"/>
<dbReference type="UniPathway" id="UPA00064">
    <property type="reaction ID" value="UER00091"/>
</dbReference>
<dbReference type="Proteomes" id="UP000002194">
    <property type="component" value="Chromosome"/>
</dbReference>
<dbReference type="GO" id="GO:0005829">
    <property type="term" value="C:cytosol"/>
    <property type="evidence" value="ECO:0007669"/>
    <property type="project" value="TreeGrafter"/>
</dbReference>
<dbReference type="GO" id="GO:0008661">
    <property type="term" value="F:1-deoxy-D-xylulose-5-phosphate synthase activity"/>
    <property type="evidence" value="ECO:0007669"/>
    <property type="project" value="UniProtKB-UniRule"/>
</dbReference>
<dbReference type="GO" id="GO:0000287">
    <property type="term" value="F:magnesium ion binding"/>
    <property type="evidence" value="ECO:0007669"/>
    <property type="project" value="UniProtKB-UniRule"/>
</dbReference>
<dbReference type="GO" id="GO:0030976">
    <property type="term" value="F:thiamine pyrophosphate binding"/>
    <property type="evidence" value="ECO:0007669"/>
    <property type="project" value="UniProtKB-UniRule"/>
</dbReference>
<dbReference type="GO" id="GO:0052865">
    <property type="term" value="P:1-deoxy-D-xylulose 5-phosphate biosynthetic process"/>
    <property type="evidence" value="ECO:0007669"/>
    <property type="project" value="UniProtKB-UniPathway"/>
</dbReference>
<dbReference type="GO" id="GO:0019288">
    <property type="term" value="P:isopentenyl diphosphate biosynthetic process, methylerythritol 4-phosphate pathway"/>
    <property type="evidence" value="ECO:0007669"/>
    <property type="project" value="TreeGrafter"/>
</dbReference>
<dbReference type="GO" id="GO:0016114">
    <property type="term" value="P:terpenoid biosynthetic process"/>
    <property type="evidence" value="ECO:0007669"/>
    <property type="project" value="UniProtKB-UniRule"/>
</dbReference>
<dbReference type="GO" id="GO:0009228">
    <property type="term" value="P:thiamine biosynthetic process"/>
    <property type="evidence" value="ECO:0007669"/>
    <property type="project" value="UniProtKB-UniRule"/>
</dbReference>
<dbReference type="CDD" id="cd02007">
    <property type="entry name" value="TPP_DXS"/>
    <property type="match status" value="1"/>
</dbReference>
<dbReference type="CDD" id="cd07033">
    <property type="entry name" value="TPP_PYR_DXS_TK_like"/>
    <property type="match status" value="1"/>
</dbReference>
<dbReference type="FunFam" id="3.40.50.970:FF:000005">
    <property type="entry name" value="1-deoxy-D-xylulose-5-phosphate synthase"/>
    <property type="match status" value="1"/>
</dbReference>
<dbReference type="Gene3D" id="3.40.50.920">
    <property type="match status" value="1"/>
</dbReference>
<dbReference type="Gene3D" id="3.40.50.970">
    <property type="match status" value="2"/>
</dbReference>
<dbReference type="HAMAP" id="MF_00315">
    <property type="entry name" value="DXP_synth"/>
    <property type="match status" value="1"/>
</dbReference>
<dbReference type="InterPro" id="IPR005477">
    <property type="entry name" value="Dxylulose-5-P_synthase"/>
</dbReference>
<dbReference type="InterPro" id="IPR029061">
    <property type="entry name" value="THDP-binding"/>
</dbReference>
<dbReference type="InterPro" id="IPR009014">
    <property type="entry name" value="Transketo_C/PFOR_II"/>
</dbReference>
<dbReference type="InterPro" id="IPR005475">
    <property type="entry name" value="Transketolase-like_Pyr-bd"/>
</dbReference>
<dbReference type="InterPro" id="IPR020826">
    <property type="entry name" value="Transketolase_BS"/>
</dbReference>
<dbReference type="InterPro" id="IPR033248">
    <property type="entry name" value="Transketolase_C"/>
</dbReference>
<dbReference type="InterPro" id="IPR049557">
    <property type="entry name" value="Transketolase_CS"/>
</dbReference>
<dbReference type="NCBIfam" id="TIGR00204">
    <property type="entry name" value="dxs"/>
    <property type="match status" value="1"/>
</dbReference>
<dbReference type="NCBIfam" id="NF003933">
    <property type="entry name" value="PRK05444.2-2"/>
    <property type="match status" value="1"/>
</dbReference>
<dbReference type="PANTHER" id="PTHR43322">
    <property type="entry name" value="1-D-DEOXYXYLULOSE 5-PHOSPHATE SYNTHASE-RELATED"/>
    <property type="match status" value="1"/>
</dbReference>
<dbReference type="PANTHER" id="PTHR43322:SF5">
    <property type="entry name" value="1-DEOXY-D-XYLULOSE-5-PHOSPHATE SYNTHASE, CHLOROPLASTIC"/>
    <property type="match status" value="1"/>
</dbReference>
<dbReference type="Pfam" id="PF13292">
    <property type="entry name" value="DXP_synthase_N"/>
    <property type="match status" value="1"/>
</dbReference>
<dbReference type="Pfam" id="PF02779">
    <property type="entry name" value="Transket_pyr"/>
    <property type="match status" value="1"/>
</dbReference>
<dbReference type="Pfam" id="PF02780">
    <property type="entry name" value="Transketolase_C"/>
    <property type="match status" value="1"/>
</dbReference>
<dbReference type="SMART" id="SM00861">
    <property type="entry name" value="Transket_pyr"/>
    <property type="match status" value="1"/>
</dbReference>
<dbReference type="SUPFAM" id="SSF52518">
    <property type="entry name" value="Thiamin diphosphate-binding fold (THDP-binding)"/>
    <property type="match status" value="2"/>
</dbReference>
<dbReference type="SUPFAM" id="SSF52922">
    <property type="entry name" value="TK C-terminal domain-like"/>
    <property type="match status" value="1"/>
</dbReference>
<dbReference type="PROSITE" id="PS00801">
    <property type="entry name" value="TRANSKETOLASE_1"/>
    <property type="match status" value="1"/>
</dbReference>
<dbReference type="PROSITE" id="PS00802">
    <property type="entry name" value="TRANSKETOLASE_2"/>
    <property type="match status" value="1"/>
</dbReference>
<keyword id="KW-0414">Isoprene biosynthesis</keyword>
<keyword id="KW-0460">Magnesium</keyword>
<keyword id="KW-0479">Metal-binding</keyword>
<keyword id="KW-1185">Reference proteome</keyword>
<keyword id="KW-0784">Thiamine biosynthesis</keyword>
<keyword id="KW-0786">Thiamine pyrophosphate</keyword>
<keyword id="KW-0808">Transferase</keyword>
<evidence type="ECO:0000255" key="1">
    <source>
        <dbReference type="HAMAP-Rule" id="MF_00315"/>
    </source>
</evidence>
<gene>
    <name evidence="1" type="primary">dxs</name>
    <name type="ordered locus">DVU_1350</name>
</gene>
<name>DXS_NITV2</name>
<comment type="function">
    <text evidence="1">Catalyzes the acyloin condensation reaction between C atoms 2 and 3 of pyruvate and glyceraldehyde 3-phosphate to yield 1-deoxy-D-xylulose-5-phosphate (DXP).</text>
</comment>
<comment type="catalytic activity">
    <reaction evidence="1">
        <text>D-glyceraldehyde 3-phosphate + pyruvate + H(+) = 1-deoxy-D-xylulose 5-phosphate + CO2</text>
        <dbReference type="Rhea" id="RHEA:12605"/>
        <dbReference type="ChEBI" id="CHEBI:15361"/>
        <dbReference type="ChEBI" id="CHEBI:15378"/>
        <dbReference type="ChEBI" id="CHEBI:16526"/>
        <dbReference type="ChEBI" id="CHEBI:57792"/>
        <dbReference type="ChEBI" id="CHEBI:59776"/>
        <dbReference type="EC" id="2.2.1.7"/>
    </reaction>
</comment>
<comment type="cofactor">
    <cofactor evidence="1">
        <name>Mg(2+)</name>
        <dbReference type="ChEBI" id="CHEBI:18420"/>
    </cofactor>
    <text evidence="1">Binds 1 Mg(2+) ion per subunit.</text>
</comment>
<comment type="cofactor">
    <cofactor evidence="1">
        <name>thiamine diphosphate</name>
        <dbReference type="ChEBI" id="CHEBI:58937"/>
    </cofactor>
    <text evidence="1">Binds 1 thiamine pyrophosphate per subunit.</text>
</comment>
<comment type="pathway">
    <text evidence="1">Metabolic intermediate biosynthesis; 1-deoxy-D-xylulose 5-phosphate biosynthesis; 1-deoxy-D-xylulose 5-phosphate from D-glyceraldehyde 3-phosphate and pyruvate: step 1/1.</text>
</comment>
<comment type="subunit">
    <text evidence="1">Homodimer.</text>
</comment>
<comment type="similarity">
    <text evidence="1">Belongs to the transketolase family. DXPS subfamily.</text>
</comment>
<accession>Q72CD3</accession>
<proteinExistence type="inferred from homology"/>
<sequence length="641" mass="69175">MTDSTIPGLLARIQRPTDVAGLSADDLRTLAADLRTAIIDTVSKNGGHLAPSLGVVELTLAMLSTFDPGKDKVVWDVGHQAYAWKLLTGRAADFHTLRRRHGISGFPKPCESEYDHFGVGHSSTSISAALGMALARDLAGDDHHVVAVIGDGSLTAGLAFEGLNQAGDMGRRLIVILNDNEMSISRNVGALSLFLSRNLSKGWARRVKRDVETALKSIPGIGDEMVAYAKRSEHSLKSFFTPGMLFEAFQFNYIGPVDGHDVKALVRNLELAKTNDRPVLLHVLTRKGKGYTPAEANPAFFHGVGRFEPETGRARKPGDTPVLPTYTDVFGETLCRLADMDERIVAITAAMPEGTGTNCFRERHPDRFVDVGICEQHAVTFAAGLAIQGYRPFVAIYSTFLQRSYDQIVHDVCIQKLPVVLCLDRAGLVGEDGPTHHGAFDLSFLRHIPHMSIIAPRDEADLQAAMYTALHLDAPLAIRYPRGVGFGIPLAESPSPLPVGVGEVLKEGEGVAVIAVGSRVHPSLEAAERLAEETGRHATVFDARWVKPLPEAQLLDIVARHDALLFVEENALAGGFSSAVLELLADRNALSGKHIRRIGLPDEFVEQGTQKELRVSLGLCMDGVGKALKELFAAVGNATAS</sequence>
<reference key="1">
    <citation type="journal article" date="2004" name="Nat. Biotechnol.">
        <title>The genome sequence of the anaerobic, sulfate-reducing bacterium Desulfovibrio vulgaris Hildenborough.</title>
        <authorList>
            <person name="Heidelberg J.F."/>
            <person name="Seshadri R."/>
            <person name="Haveman S.A."/>
            <person name="Hemme C.L."/>
            <person name="Paulsen I.T."/>
            <person name="Kolonay J.F."/>
            <person name="Eisen J.A."/>
            <person name="Ward N.L."/>
            <person name="Methe B.A."/>
            <person name="Brinkac L.M."/>
            <person name="Daugherty S.C."/>
            <person name="DeBoy R.T."/>
            <person name="Dodson R.J."/>
            <person name="Durkin A.S."/>
            <person name="Madupu R."/>
            <person name="Nelson W.C."/>
            <person name="Sullivan S.A."/>
            <person name="Fouts D.E."/>
            <person name="Haft D.H."/>
            <person name="Selengut J."/>
            <person name="Peterson J.D."/>
            <person name="Davidsen T.M."/>
            <person name="Zafar N."/>
            <person name="Zhou L."/>
            <person name="Radune D."/>
            <person name="Dimitrov G."/>
            <person name="Hance M."/>
            <person name="Tran K."/>
            <person name="Khouri H.M."/>
            <person name="Gill J."/>
            <person name="Utterback T.R."/>
            <person name="Feldblyum T.V."/>
            <person name="Wall J.D."/>
            <person name="Voordouw G."/>
            <person name="Fraser C.M."/>
        </authorList>
    </citation>
    <scope>NUCLEOTIDE SEQUENCE [LARGE SCALE GENOMIC DNA]</scope>
    <source>
        <strain>ATCC 29579 / DSM 644 / CCUG 34227 / NCIMB 8303 / VKM B-1760 / Hildenborough</strain>
    </source>
</reference>